<organism>
    <name type="scientific">Saccharomyces cerevisiae (strain ATCC 204508 / S288c)</name>
    <name type="common">Baker's yeast</name>
    <dbReference type="NCBI Taxonomy" id="559292"/>
    <lineage>
        <taxon>Eukaryota</taxon>
        <taxon>Fungi</taxon>
        <taxon>Dikarya</taxon>
        <taxon>Ascomycota</taxon>
        <taxon>Saccharomycotina</taxon>
        <taxon>Saccharomycetes</taxon>
        <taxon>Saccharomycetales</taxon>
        <taxon>Saccharomycetaceae</taxon>
        <taxon>Saccharomyces</taxon>
    </lineage>
</organism>
<protein>
    <recommendedName>
        <fullName>Cytoplasmic 60S subunit biogenesis factor REH1</fullName>
    </recommendedName>
    <alternativeName>
        <fullName>REI1-homolog 1</fullName>
    </alternativeName>
    <alternativeName>
        <fullName>pre-60S factor REH1</fullName>
    </alternativeName>
</protein>
<name>REH1_YEAST</name>
<reference key="1">
    <citation type="journal article" date="1997" name="Nature">
        <title>The nucleotide sequence of Saccharomyces cerevisiae chromosome XII.</title>
        <authorList>
            <person name="Johnston M."/>
            <person name="Hillier L.W."/>
            <person name="Riles L."/>
            <person name="Albermann K."/>
            <person name="Andre B."/>
            <person name="Ansorge W."/>
            <person name="Benes V."/>
            <person name="Brueckner M."/>
            <person name="Delius H."/>
            <person name="Dubois E."/>
            <person name="Duesterhoeft A."/>
            <person name="Entian K.-D."/>
            <person name="Floeth M."/>
            <person name="Goffeau A."/>
            <person name="Hebling U."/>
            <person name="Heumann K."/>
            <person name="Heuss-Neitzel D."/>
            <person name="Hilbert H."/>
            <person name="Hilger F."/>
            <person name="Kleine K."/>
            <person name="Koetter P."/>
            <person name="Louis E.J."/>
            <person name="Messenguy F."/>
            <person name="Mewes H.-W."/>
            <person name="Miosga T."/>
            <person name="Moestl D."/>
            <person name="Mueller-Auer S."/>
            <person name="Nentwich U."/>
            <person name="Obermaier B."/>
            <person name="Piravandi E."/>
            <person name="Pohl T.M."/>
            <person name="Portetelle D."/>
            <person name="Purnelle B."/>
            <person name="Rechmann S."/>
            <person name="Rieger M."/>
            <person name="Rinke M."/>
            <person name="Rose M."/>
            <person name="Scharfe M."/>
            <person name="Scherens B."/>
            <person name="Scholler P."/>
            <person name="Schwager C."/>
            <person name="Schwarz S."/>
            <person name="Underwood A.P."/>
            <person name="Urrestarazu L.A."/>
            <person name="Vandenbol M."/>
            <person name="Verhasselt P."/>
            <person name="Vierendeels F."/>
            <person name="Voet M."/>
            <person name="Volckaert G."/>
            <person name="Voss H."/>
            <person name="Wambutt R."/>
            <person name="Wedler E."/>
            <person name="Wedler H."/>
            <person name="Zimmermann F.K."/>
            <person name="Zollner A."/>
            <person name="Hani J."/>
            <person name="Hoheisel J.D."/>
        </authorList>
    </citation>
    <scope>NUCLEOTIDE SEQUENCE [LARGE SCALE GENOMIC DNA]</scope>
    <source>
        <strain>ATCC 204508 / S288c</strain>
    </source>
</reference>
<reference key="2">
    <citation type="journal article" date="2014" name="G3 (Bethesda)">
        <title>The reference genome sequence of Saccharomyces cerevisiae: Then and now.</title>
        <authorList>
            <person name="Engel S.R."/>
            <person name="Dietrich F.S."/>
            <person name="Fisk D.G."/>
            <person name="Binkley G."/>
            <person name="Balakrishnan R."/>
            <person name="Costanzo M.C."/>
            <person name="Dwight S.S."/>
            <person name="Hitz B.C."/>
            <person name="Karra K."/>
            <person name="Nash R.S."/>
            <person name="Weng S."/>
            <person name="Wong E.D."/>
            <person name="Lloyd P."/>
            <person name="Skrzypek M.S."/>
            <person name="Miyasato S.R."/>
            <person name="Simison M."/>
            <person name="Cherry J.M."/>
        </authorList>
    </citation>
    <scope>GENOME REANNOTATION</scope>
    <source>
        <strain>ATCC 204508 / S288c</strain>
    </source>
</reference>
<reference key="3">
    <citation type="journal article" date="2007" name="Genome Res.">
        <title>Approaching a complete repository of sequence-verified protein-encoding clones for Saccharomyces cerevisiae.</title>
        <authorList>
            <person name="Hu Y."/>
            <person name="Rolfs A."/>
            <person name="Bhullar B."/>
            <person name="Murthy T.V.S."/>
            <person name="Zhu C."/>
            <person name="Berger M.F."/>
            <person name="Camargo A.A."/>
            <person name="Kelley F."/>
            <person name="McCarron S."/>
            <person name="Jepson D."/>
            <person name="Richardson A."/>
            <person name="Raphael J."/>
            <person name="Moreira D."/>
            <person name="Taycher E."/>
            <person name="Zuo D."/>
            <person name="Mohr S."/>
            <person name="Kane M.F."/>
            <person name="Williamson J."/>
            <person name="Simpson A.J.G."/>
            <person name="Bulyk M.L."/>
            <person name="Harlow E."/>
            <person name="Marsischky G."/>
            <person name="Kolodner R.D."/>
            <person name="LaBaer J."/>
        </authorList>
    </citation>
    <scope>NUCLEOTIDE SEQUENCE [GENOMIC DNA]</scope>
    <source>
        <strain>ATCC 204508 / S288c</strain>
    </source>
</reference>
<reference key="4">
    <citation type="journal article" date="1997" name="Nucleic Acids Res.">
        <title>Variations of the C2H2 zinc finger motif in the yeast genome and classification of yeast zinc finger proteins.</title>
        <authorList>
            <person name="Boehm S."/>
            <person name="Frishman D."/>
            <person name="Mewes H.-W."/>
        </authorList>
    </citation>
    <scope>DOMAIN</scope>
</reference>
<reference key="5">
    <citation type="journal article" date="2003" name="Nature">
        <title>Global analysis of protein localization in budding yeast.</title>
        <authorList>
            <person name="Huh W.-K."/>
            <person name="Falvo J.V."/>
            <person name="Gerke L.C."/>
            <person name="Carroll A.S."/>
            <person name="Howson R.W."/>
            <person name="Weissman J.S."/>
            <person name="O'Shea E.K."/>
        </authorList>
    </citation>
    <scope>SUBCELLULAR LOCATION [LARGE SCALE ANALYSIS]</scope>
</reference>
<reference key="6">
    <citation type="journal article" date="2003" name="Nature">
        <title>Global analysis of protein expression in yeast.</title>
        <authorList>
            <person name="Ghaemmaghami S."/>
            <person name="Huh W.-K."/>
            <person name="Bower K."/>
            <person name="Howson R.W."/>
            <person name="Belle A."/>
            <person name="Dephoure N."/>
            <person name="O'Shea E.K."/>
            <person name="Weissman J.S."/>
        </authorList>
    </citation>
    <scope>LEVEL OF PROTEIN EXPRESSION [LARGE SCALE ANALYSIS]</scope>
</reference>
<reference key="7">
    <citation type="journal article" date="2009" name="Mol. Cell. Biol.">
        <title>Functional redundancy of yeast proteins Reh1 and Rei1 in cytoplasmic 60S subunit maturation.</title>
        <authorList>
            <person name="Parnell K.M."/>
            <person name="Bass B.L."/>
        </authorList>
    </citation>
    <scope>FUNCTION</scope>
    <scope>ASSOCIATION WITH PRE-60S PARTICLES</scope>
    <scope>INTERACTION WITH NMD3; LSG1 AND TIF6</scope>
</reference>
<accession>Q06709</accession>
<accession>D6VZ22</accession>
<accession>Q7LIF0</accession>
<feature type="chain" id="PRO_0000268700" description="Cytoplasmic 60S subunit biogenesis factor REH1">
    <location>
        <begin position="1"/>
        <end position="432"/>
    </location>
</feature>
<feature type="zinc finger region" description="C2H2-type 1">
    <location>
        <begin position="6"/>
        <end position="30"/>
    </location>
</feature>
<feature type="zinc finger region" description="C2H2-type 2">
    <location>
        <begin position="186"/>
        <end position="209"/>
    </location>
</feature>
<feature type="zinc finger region" description="C2H2-type 3">
    <location>
        <begin position="237"/>
        <end position="261"/>
    </location>
</feature>
<feature type="region of interest" description="Disordered" evidence="1">
    <location>
        <begin position="79"/>
        <end position="150"/>
    </location>
</feature>
<feature type="compositionally biased region" description="Basic residues" evidence="1">
    <location>
        <begin position="86"/>
        <end position="98"/>
    </location>
</feature>
<feature type="compositionally biased region" description="Basic and acidic residues" evidence="1">
    <location>
        <begin position="105"/>
        <end position="117"/>
    </location>
</feature>
<feature type="compositionally biased region" description="Polar residues" evidence="1">
    <location>
        <begin position="118"/>
        <end position="143"/>
    </location>
</feature>
<proteinExistence type="evidence at protein level"/>
<dbReference type="EMBL" id="U19104">
    <property type="protein sequence ID" value="AAB67280.1"/>
    <property type="molecule type" value="Genomic_DNA"/>
</dbReference>
<dbReference type="EMBL" id="U19729">
    <property type="protein sequence ID" value="AAB82362.1"/>
    <property type="molecule type" value="Genomic_DNA"/>
</dbReference>
<dbReference type="EMBL" id="AY692733">
    <property type="protein sequence ID" value="AAT92752.1"/>
    <property type="molecule type" value="Genomic_DNA"/>
</dbReference>
<dbReference type="EMBL" id="BK006945">
    <property type="protein sequence ID" value="DAA09688.1"/>
    <property type="molecule type" value="Genomic_DNA"/>
</dbReference>
<dbReference type="PIR" id="S51474">
    <property type="entry name" value="S51474"/>
</dbReference>
<dbReference type="RefSeq" id="NP_013491.1">
    <property type="nucleotide sequence ID" value="NM_001182276.1"/>
</dbReference>
<dbReference type="PDB" id="5H4P">
    <property type="method" value="EM"/>
    <property type="resolution" value="3.07 A"/>
    <property type="chains" value="z=377-432"/>
</dbReference>
<dbReference type="PDB" id="6QIK">
    <property type="method" value="EM"/>
    <property type="resolution" value="3.10 A"/>
    <property type="chains" value="z=1-432"/>
</dbReference>
<dbReference type="PDB" id="6QT0">
    <property type="method" value="EM"/>
    <property type="resolution" value="3.40 A"/>
    <property type="chains" value="z=1-432"/>
</dbReference>
<dbReference type="PDB" id="6QTZ">
    <property type="method" value="EM"/>
    <property type="resolution" value="3.50 A"/>
    <property type="chains" value="z=1-432"/>
</dbReference>
<dbReference type="PDB" id="6RI5">
    <property type="method" value="EM"/>
    <property type="resolution" value="3.30 A"/>
    <property type="chains" value="z=1-432"/>
</dbReference>
<dbReference type="PDB" id="6S05">
    <property type="method" value="EM"/>
    <property type="resolution" value="3.90 A"/>
    <property type="chains" value="z=1-432"/>
</dbReference>
<dbReference type="PDB" id="8UT0">
    <property type="method" value="EM"/>
    <property type="resolution" value="3.22 A"/>
    <property type="chains" value="z=2-432"/>
</dbReference>
<dbReference type="PDB" id="8UTI">
    <property type="method" value="EM"/>
    <property type="resolution" value="3.13 A"/>
    <property type="chains" value="z=2-432"/>
</dbReference>
<dbReference type="PDBsum" id="5H4P"/>
<dbReference type="PDBsum" id="6QIK"/>
<dbReference type="PDBsum" id="6QT0"/>
<dbReference type="PDBsum" id="6QTZ"/>
<dbReference type="PDBsum" id="6RI5"/>
<dbReference type="PDBsum" id="6S05"/>
<dbReference type="PDBsum" id="8UT0"/>
<dbReference type="PDBsum" id="8UTI"/>
<dbReference type="EMDB" id="EMD-10071"/>
<dbReference type="EMDB" id="EMD-4560"/>
<dbReference type="EMDB" id="EMD-4630"/>
<dbReference type="EMDB" id="EMD-4636"/>
<dbReference type="EMDB" id="EMD-4884"/>
<dbReference type="SMR" id="Q06709"/>
<dbReference type="BioGRID" id="31646">
    <property type="interactions" value="73"/>
</dbReference>
<dbReference type="DIP" id="DIP-4235N"/>
<dbReference type="FunCoup" id="Q06709">
    <property type="interactions" value="701"/>
</dbReference>
<dbReference type="IntAct" id="Q06709">
    <property type="interactions" value="9"/>
</dbReference>
<dbReference type="MINT" id="Q06709"/>
<dbReference type="STRING" id="4932.YLR387C"/>
<dbReference type="iPTMnet" id="Q06709"/>
<dbReference type="PaxDb" id="4932-YLR387C"/>
<dbReference type="PeptideAtlas" id="Q06709"/>
<dbReference type="EnsemblFungi" id="YLR387C_mRNA">
    <property type="protein sequence ID" value="YLR387C"/>
    <property type="gene ID" value="YLR387C"/>
</dbReference>
<dbReference type="GeneID" id="851103"/>
<dbReference type="KEGG" id="sce:YLR387C"/>
<dbReference type="AGR" id="SGD:S000004379"/>
<dbReference type="SGD" id="S000004379">
    <property type="gene designation" value="REH1"/>
</dbReference>
<dbReference type="VEuPathDB" id="FungiDB:YLR387C"/>
<dbReference type="eggNOG" id="KOG2785">
    <property type="taxonomic scope" value="Eukaryota"/>
</dbReference>
<dbReference type="GeneTree" id="ENSGT00390000018047"/>
<dbReference type="HOGENOM" id="CLU_018787_1_1_1"/>
<dbReference type="InParanoid" id="Q06709"/>
<dbReference type="OMA" id="QRYHMKT"/>
<dbReference type="OrthoDB" id="19329at2759"/>
<dbReference type="BioCyc" id="YEAST:G3O-32453-MONOMER"/>
<dbReference type="BioGRID-ORCS" id="851103">
    <property type="hits" value="0 hits in 10 CRISPR screens"/>
</dbReference>
<dbReference type="PRO" id="PR:Q06709"/>
<dbReference type="Proteomes" id="UP000002311">
    <property type="component" value="Chromosome XII"/>
</dbReference>
<dbReference type="RNAct" id="Q06709">
    <property type="molecule type" value="protein"/>
</dbReference>
<dbReference type="GO" id="GO:0005737">
    <property type="term" value="C:cytoplasm"/>
    <property type="evidence" value="ECO:0007005"/>
    <property type="project" value="SGD"/>
</dbReference>
<dbReference type="GO" id="GO:0030687">
    <property type="term" value="C:preribosome, large subunit precursor"/>
    <property type="evidence" value="ECO:0000318"/>
    <property type="project" value="GO_Central"/>
</dbReference>
<dbReference type="GO" id="GO:0008270">
    <property type="term" value="F:zinc ion binding"/>
    <property type="evidence" value="ECO:0007669"/>
    <property type="project" value="UniProtKB-KW"/>
</dbReference>
<dbReference type="GO" id="GO:0042273">
    <property type="term" value="P:ribosomal large subunit biogenesis"/>
    <property type="evidence" value="ECO:0000316"/>
    <property type="project" value="SGD"/>
</dbReference>
<dbReference type="InterPro" id="IPR041661">
    <property type="entry name" value="ZN622/Rei1/Reh1_Znf-C2H2"/>
</dbReference>
<dbReference type="InterPro" id="IPR040025">
    <property type="entry name" value="Znf622/Rei1/Reh1"/>
</dbReference>
<dbReference type="PANTHER" id="PTHR13182:SF8">
    <property type="entry name" value="CYTOPLASMIC 60S SUBUNIT BIOGENESIS FACTOR ZNF622"/>
    <property type="match status" value="1"/>
</dbReference>
<dbReference type="PANTHER" id="PTHR13182">
    <property type="entry name" value="ZINC FINGER PROTEIN 622"/>
    <property type="match status" value="1"/>
</dbReference>
<dbReference type="Pfam" id="PF12756">
    <property type="entry name" value="zf-C2H2_2"/>
    <property type="match status" value="1"/>
</dbReference>
<dbReference type="PROSITE" id="PS00028">
    <property type="entry name" value="ZINC_FINGER_C2H2_1"/>
    <property type="match status" value="1"/>
</dbReference>
<gene>
    <name type="primary">REH1</name>
    <name type="ordered locus">YLR387C</name>
</gene>
<sequence length="432" mass="49690">MSSTFFTCNCCVIQFKTSDLQRYHMKTEWHRYNLKRRIANLPPIGAEQFAEKLQISEKEQAENQVDEFGFPVLKPVMNQSNALPQKQKKPIKSKRGRKVGTNLLKRKDRDIAKEKQNRSVSPSGSISSQLSNLTVGTENTNTDYGEDTVSEYGFTSDSNYEYATSDEELDIADKPSDKENEKITITECIYCGKDNKEVERNVKHMFSEHGLFIPERSYLIDLNGLLEFLIKMIVIDHNCLCCNFHGSGLESIRAHMASKRHCRLPYETKEERQLFAPFYDFTYDDHSISKNLQNDRAITSKLSSVYGAKNDEEDGEVDITLVSSENDINANYTTVSIDESGLELTLPTGARLGHRAGQRYYRQNLPSQPNPNESRRTITAADRRMVSGVTEKQYKKGMKKMQQLEKNAINTQIRREIKRVNFQTHYRDELLQ</sequence>
<comment type="function">
    <text evidence="4">Pre-60S-associated cytoplasmic factor involved in the cytoplasmic maturation of the 60S subunit. May act redundantly with REI1 to directly promote a stabilizing structural rearrangement in cytoplasmic 60S subunit maturation independent on the REI1-specific ARX1 recycling.</text>
</comment>
<comment type="subunit">
    <text evidence="4">Associates with nascent pre-60S particles that have not yet entered the translating pool, and is released from mature 60S subunits. Interacts with pre-60S factors NMD3, LSG1, and TIF6.</text>
</comment>
<comment type="subcellular location">
    <subcellularLocation>
        <location evidence="2">Cytoplasm</location>
    </subcellularLocation>
</comment>
<comment type="miscellaneous">
    <text evidence="3">Present with 2240 molecules/cell in log phase SD medium.</text>
</comment>
<comment type="similarity">
    <text evidence="5">Belongs to the REI1 family.</text>
</comment>
<keyword id="KW-0002">3D-structure</keyword>
<keyword id="KW-0963">Cytoplasm</keyword>
<keyword id="KW-0479">Metal-binding</keyword>
<keyword id="KW-1185">Reference proteome</keyword>
<keyword id="KW-0677">Repeat</keyword>
<keyword id="KW-0690">Ribosome biogenesis</keyword>
<keyword id="KW-0862">Zinc</keyword>
<keyword id="KW-0863">Zinc-finger</keyword>
<evidence type="ECO:0000256" key="1">
    <source>
        <dbReference type="SAM" id="MobiDB-lite"/>
    </source>
</evidence>
<evidence type="ECO:0000269" key="2">
    <source>
    </source>
</evidence>
<evidence type="ECO:0000269" key="3">
    <source>
    </source>
</evidence>
<evidence type="ECO:0000269" key="4">
    <source>
    </source>
</evidence>
<evidence type="ECO:0000305" key="5"/>